<accession>C1F461</accession>
<comment type="function">
    <text evidence="1">Catalyzes the initial step of the lipid cycle reactions in the biosynthesis of the cell wall peptidoglycan: transfers peptidoglycan precursor phospho-MurNAc-pentapeptide from UDP-MurNAc-pentapeptide onto the lipid carrier undecaprenyl phosphate, yielding undecaprenyl-pyrophosphoryl-MurNAc-pentapeptide, known as lipid I.</text>
</comment>
<comment type="catalytic activity">
    <reaction evidence="1">
        <text>UDP-N-acetyl-alpha-D-muramoyl-L-alanyl-gamma-D-glutamyl-meso-2,6-diaminopimeloyl-D-alanyl-D-alanine + di-trans,octa-cis-undecaprenyl phosphate = di-trans,octa-cis-undecaprenyl diphospho-N-acetyl-alpha-D-muramoyl-L-alanyl-D-glutamyl-meso-2,6-diaminopimeloyl-D-alanyl-D-alanine + UMP</text>
        <dbReference type="Rhea" id="RHEA:28386"/>
        <dbReference type="ChEBI" id="CHEBI:57865"/>
        <dbReference type="ChEBI" id="CHEBI:60392"/>
        <dbReference type="ChEBI" id="CHEBI:61386"/>
        <dbReference type="ChEBI" id="CHEBI:61387"/>
        <dbReference type="EC" id="2.7.8.13"/>
    </reaction>
</comment>
<comment type="cofactor">
    <cofactor evidence="1">
        <name>Mg(2+)</name>
        <dbReference type="ChEBI" id="CHEBI:18420"/>
    </cofactor>
</comment>
<comment type="pathway">
    <text evidence="1">Cell wall biogenesis; peptidoglycan biosynthesis.</text>
</comment>
<comment type="subcellular location">
    <subcellularLocation>
        <location evidence="1">Cell inner membrane</location>
        <topology evidence="1">Multi-pass membrane protein</topology>
    </subcellularLocation>
</comment>
<comment type="similarity">
    <text evidence="1">Belongs to the glycosyltransferase 4 family. MraY subfamily.</text>
</comment>
<keyword id="KW-0131">Cell cycle</keyword>
<keyword id="KW-0132">Cell division</keyword>
<keyword id="KW-0997">Cell inner membrane</keyword>
<keyword id="KW-1003">Cell membrane</keyword>
<keyword id="KW-0133">Cell shape</keyword>
<keyword id="KW-0961">Cell wall biogenesis/degradation</keyword>
<keyword id="KW-0460">Magnesium</keyword>
<keyword id="KW-0472">Membrane</keyword>
<keyword id="KW-0479">Metal-binding</keyword>
<keyword id="KW-0573">Peptidoglycan synthesis</keyword>
<keyword id="KW-1185">Reference proteome</keyword>
<keyword id="KW-0808">Transferase</keyword>
<keyword id="KW-0812">Transmembrane</keyword>
<keyword id="KW-1133">Transmembrane helix</keyword>
<dbReference type="EC" id="2.7.8.13" evidence="1"/>
<dbReference type="EMBL" id="CP001472">
    <property type="protein sequence ID" value="ACO32749.1"/>
    <property type="molecule type" value="Genomic_DNA"/>
</dbReference>
<dbReference type="RefSeq" id="WP_015896247.1">
    <property type="nucleotide sequence ID" value="NC_012483.1"/>
</dbReference>
<dbReference type="SMR" id="C1F461"/>
<dbReference type="FunCoup" id="C1F461">
    <property type="interactions" value="394"/>
</dbReference>
<dbReference type="STRING" id="240015.ACP_1089"/>
<dbReference type="KEGG" id="aca:ACP_1089"/>
<dbReference type="eggNOG" id="COG0472">
    <property type="taxonomic scope" value="Bacteria"/>
</dbReference>
<dbReference type="HOGENOM" id="CLU_023982_0_0_0"/>
<dbReference type="InParanoid" id="C1F461"/>
<dbReference type="OrthoDB" id="9805475at2"/>
<dbReference type="UniPathway" id="UPA00219"/>
<dbReference type="Proteomes" id="UP000002207">
    <property type="component" value="Chromosome"/>
</dbReference>
<dbReference type="GO" id="GO:0005886">
    <property type="term" value="C:plasma membrane"/>
    <property type="evidence" value="ECO:0007669"/>
    <property type="project" value="UniProtKB-SubCell"/>
</dbReference>
<dbReference type="GO" id="GO:0046872">
    <property type="term" value="F:metal ion binding"/>
    <property type="evidence" value="ECO:0007669"/>
    <property type="project" value="UniProtKB-KW"/>
</dbReference>
<dbReference type="GO" id="GO:0008963">
    <property type="term" value="F:phospho-N-acetylmuramoyl-pentapeptide-transferase activity"/>
    <property type="evidence" value="ECO:0007669"/>
    <property type="project" value="UniProtKB-UniRule"/>
</dbReference>
<dbReference type="GO" id="GO:0051992">
    <property type="term" value="F:UDP-N-acetylmuramoyl-L-alanyl-D-glutamyl-meso-2,6-diaminopimelyl-D-alanyl-D-alanine:undecaprenyl-phosphate transferase activity"/>
    <property type="evidence" value="ECO:0007669"/>
    <property type="project" value="RHEA"/>
</dbReference>
<dbReference type="GO" id="GO:0051301">
    <property type="term" value="P:cell division"/>
    <property type="evidence" value="ECO:0007669"/>
    <property type="project" value="UniProtKB-KW"/>
</dbReference>
<dbReference type="GO" id="GO:0071555">
    <property type="term" value="P:cell wall organization"/>
    <property type="evidence" value="ECO:0007669"/>
    <property type="project" value="UniProtKB-KW"/>
</dbReference>
<dbReference type="GO" id="GO:0009252">
    <property type="term" value="P:peptidoglycan biosynthetic process"/>
    <property type="evidence" value="ECO:0007669"/>
    <property type="project" value="UniProtKB-UniRule"/>
</dbReference>
<dbReference type="GO" id="GO:0008360">
    <property type="term" value="P:regulation of cell shape"/>
    <property type="evidence" value="ECO:0007669"/>
    <property type="project" value="UniProtKB-KW"/>
</dbReference>
<dbReference type="CDD" id="cd06852">
    <property type="entry name" value="GT_MraY"/>
    <property type="match status" value="1"/>
</dbReference>
<dbReference type="HAMAP" id="MF_00038">
    <property type="entry name" value="MraY"/>
    <property type="match status" value="1"/>
</dbReference>
<dbReference type="InterPro" id="IPR000715">
    <property type="entry name" value="Glycosyl_transferase_4"/>
</dbReference>
<dbReference type="InterPro" id="IPR003524">
    <property type="entry name" value="PNAcMuramoyl-5peptid_Trfase"/>
</dbReference>
<dbReference type="InterPro" id="IPR018480">
    <property type="entry name" value="PNAcMuramoyl-5peptid_Trfase_CS"/>
</dbReference>
<dbReference type="NCBIfam" id="TIGR00445">
    <property type="entry name" value="mraY"/>
    <property type="match status" value="1"/>
</dbReference>
<dbReference type="PANTHER" id="PTHR22926">
    <property type="entry name" value="PHOSPHO-N-ACETYLMURAMOYL-PENTAPEPTIDE-TRANSFERASE"/>
    <property type="match status" value="1"/>
</dbReference>
<dbReference type="PANTHER" id="PTHR22926:SF5">
    <property type="entry name" value="PHOSPHO-N-ACETYLMURAMOYL-PENTAPEPTIDE-TRANSFERASE HOMOLOG"/>
    <property type="match status" value="1"/>
</dbReference>
<dbReference type="Pfam" id="PF00953">
    <property type="entry name" value="Glycos_transf_4"/>
    <property type="match status" value="1"/>
</dbReference>
<dbReference type="Pfam" id="PF10555">
    <property type="entry name" value="MraY_sig1"/>
    <property type="match status" value="1"/>
</dbReference>
<dbReference type="PROSITE" id="PS01348">
    <property type="entry name" value="MRAY_2"/>
    <property type="match status" value="1"/>
</dbReference>
<organism>
    <name type="scientific">Acidobacterium capsulatum (strain ATCC 51196 / DSM 11244 / BCRC 80197 / JCM 7670 / NBRC 15755 / NCIMB 13165 / 161)</name>
    <dbReference type="NCBI Taxonomy" id="240015"/>
    <lineage>
        <taxon>Bacteria</taxon>
        <taxon>Pseudomonadati</taxon>
        <taxon>Acidobacteriota</taxon>
        <taxon>Terriglobia</taxon>
        <taxon>Terriglobales</taxon>
        <taxon>Acidobacteriaceae</taxon>
        <taxon>Acidobacterium</taxon>
    </lineage>
</organism>
<protein>
    <recommendedName>
        <fullName evidence="1">Phospho-N-acetylmuramoyl-pentapeptide-transferase</fullName>
        <ecNumber evidence="1">2.7.8.13</ecNumber>
    </recommendedName>
    <alternativeName>
        <fullName evidence="1">UDP-MurNAc-pentapeptide phosphotransferase</fullName>
    </alternativeName>
</protein>
<reference key="1">
    <citation type="journal article" date="2009" name="Appl. Environ. Microbiol.">
        <title>Three genomes from the phylum Acidobacteria provide insight into the lifestyles of these microorganisms in soils.</title>
        <authorList>
            <person name="Ward N.L."/>
            <person name="Challacombe J.F."/>
            <person name="Janssen P.H."/>
            <person name="Henrissat B."/>
            <person name="Coutinho P.M."/>
            <person name="Wu M."/>
            <person name="Xie G."/>
            <person name="Haft D.H."/>
            <person name="Sait M."/>
            <person name="Badger J."/>
            <person name="Barabote R.D."/>
            <person name="Bradley B."/>
            <person name="Brettin T.S."/>
            <person name="Brinkac L.M."/>
            <person name="Bruce D."/>
            <person name="Creasy T."/>
            <person name="Daugherty S.C."/>
            <person name="Davidsen T.M."/>
            <person name="DeBoy R.T."/>
            <person name="Detter J.C."/>
            <person name="Dodson R.J."/>
            <person name="Durkin A.S."/>
            <person name="Ganapathy A."/>
            <person name="Gwinn-Giglio M."/>
            <person name="Han C.S."/>
            <person name="Khouri H."/>
            <person name="Kiss H."/>
            <person name="Kothari S.P."/>
            <person name="Madupu R."/>
            <person name="Nelson K.E."/>
            <person name="Nelson W.C."/>
            <person name="Paulsen I."/>
            <person name="Penn K."/>
            <person name="Ren Q."/>
            <person name="Rosovitz M.J."/>
            <person name="Selengut J.D."/>
            <person name="Shrivastava S."/>
            <person name="Sullivan S.A."/>
            <person name="Tapia R."/>
            <person name="Thompson L.S."/>
            <person name="Watkins K.L."/>
            <person name="Yang Q."/>
            <person name="Yu C."/>
            <person name="Zafar N."/>
            <person name="Zhou L."/>
            <person name="Kuske C.R."/>
        </authorList>
    </citation>
    <scope>NUCLEOTIDE SEQUENCE [LARGE SCALE GENOMIC DNA]</scope>
    <source>
        <strain>ATCC 51196 / DSM 11244 / BCRC 80197 / JCM 7670 / NBRC 15755 / NCIMB 13165 / 161</strain>
    </source>
</reference>
<feature type="chain" id="PRO_1000117153" description="Phospho-N-acetylmuramoyl-pentapeptide-transferase">
    <location>
        <begin position="1"/>
        <end position="377"/>
    </location>
</feature>
<feature type="transmembrane region" description="Helical" evidence="1">
    <location>
        <begin position="27"/>
        <end position="47"/>
    </location>
</feature>
<feature type="transmembrane region" description="Helical" evidence="1">
    <location>
        <begin position="71"/>
        <end position="91"/>
    </location>
</feature>
<feature type="transmembrane region" description="Helical" evidence="1">
    <location>
        <begin position="94"/>
        <end position="114"/>
    </location>
</feature>
<feature type="transmembrane region" description="Helical" evidence="1">
    <location>
        <begin position="139"/>
        <end position="159"/>
    </location>
</feature>
<feature type="transmembrane region" description="Helical" evidence="1">
    <location>
        <begin position="182"/>
        <end position="202"/>
    </location>
</feature>
<feature type="transmembrane region" description="Helical" evidence="1">
    <location>
        <begin position="216"/>
        <end position="236"/>
    </location>
</feature>
<feature type="transmembrane region" description="Helical" evidence="1">
    <location>
        <begin position="252"/>
        <end position="272"/>
    </location>
</feature>
<feature type="transmembrane region" description="Helical" evidence="1">
    <location>
        <begin position="280"/>
        <end position="300"/>
    </location>
</feature>
<feature type="transmembrane region" description="Helical" evidence="1">
    <location>
        <begin position="305"/>
        <end position="325"/>
    </location>
</feature>
<feature type="transmembrane region" description="Helical" evidence="1">
    <location>
        <begin position="354"/>
        <end position="374"/>
    </location>
</feature>
<proteinExistence type="inferred from homology"/>
<gene>
    <name evidence="1" type="primary">mraY</name>
    <name type="ordered locus">ACP_1089</name>
</gene>
<name>MRAY_ACIC5</name>
<evidence type="ECO:0000255" key="1">
    <source>
        <dbReference type="HAMAP-Rule" id="MF_00038"/>
    </source>
</evidence>
<sequence>MLYWLLYQKLFPYFRPFRIFRYLTFRTAFASLTALLIALLIGPYVIEKLREFQIGQYIREEGPQAHQKKAGTPTMGGVLICIAILLPTLLWSDLSDPFVWIVMLSTLAFGAIGFADDYIKVVHRRNLGLTARAKMTYQILASAAIGVALVVLQGQGSYSTDLMVPFAKSLRPRFSIPALLHVPHLAYFAFIPFVIFVIIVIVGSSNAVNLTDGLDGLAIGCTIIAAGALTVLTYVSGHAVFADYLELQRMPMVGEVTIFCGAMVGASIGFLWYNAHPAQIFMGDVGSLALGGAIATVAVVIKQELLLPFIGGIFVLEALSVILQVGSYKLRKKRIFKMAPLHHHFELIGWSESKVIVRFWIAALVFALFALTTLKLR</sequence>